<reference key="1">
    <citation type="journal article" date="2009" name="Nature">
        <title>The Sorghum bicolor genome and the diversification of grasses.</title>
        <authorList>
            <person name="Paterson A.H."/>
            <person name="Bowers J.E."/>
            <person name="Bruggmann R."/>
            <person name="Dubchak I."/>
            <person name="Grimwood J."/>
            <person name="Gundlach H."/>
            <person name="Haberer G."/>
            <person name="Hellsten U."/>
            <person name="Mitros T."/>
            <person name="Poliakov A."/>
            <person name="Schmutz J."/>
            <person name="Spannagl M."/>
            <person name="Tang H."/>
            <person name="Wang X."/>
            <person name="Wicker T."/>
            <person name="Bharti A.K."/>
            <person name="Chapman J."/>
            <person name="Feltus F.A."/>
            <person name="Gowik U."/>
            <person name="Grigoriev I.V."/>
            <person name="Lyons E."/>
            <person name="Maher C.A."/>
            <person name="Martis M."/>
            <person name="Narechania A."/>
            <person name="Otillar R.P."/>
            <person name="Penning B.W."/>
            <person name="Salamov A.A."/>
            <person name="Wang Y."/>
            <person name="Zhang L."/>
            <person name="Carpita N.C."/>
            <person name="Freeling M."/>
            <person name="Gingle A.R."/>
            <person name="Hash C.T."/>
            <person name="Keller B."/>
            <person name="Klein P."/>
            <person name="Kresovich S."/>
            <person name="McCann M.C."/>
            <person name="Ming R."/>
            <person name="Peterson D.G."/>
            <person name="Mehboob-ur-Rahman M."/>
            <person name="Ware D."/>
            <person name="Westhoff P."/>
            <person name="Mayer K.F.X."/>
            <person name="Messing J."/>
            <person name="Rokhsar D.S."/>
        </authorList>
    </citation>
    <scope>NUCLEOTIDE SEQUENCE [LARGE SCALE GENOMIC DNA]</scope>
    <source>
        <strain>cv. BTx623</strain>
    </source>
</reference>
<reference key="2">
    <citation type="journal article" date="2018" name="Plant J.">
        <title>The Sorghum bicolor reference genome: improved assembly, gene annotations, a transcriptome atlas, and signatures of genome organization.</title>
        <authorList>
            <person name="McCormick R.F."/>
            <person name="Truong S.K."/>
            <person name="Sreedasyam A."/>
            <person name="Jenkins J."/>
            <person name="Shu S."/>
            <person name="Sims D."/>
            <person name="Kennedy M."/>
            <person name="Amirebrahimi M."/>
            <person name="Weers B.D."/>
            <person name="McKinley B."/>
            <person name="Mattison A."/>
            <person name="Morishige D.T."/>
            <person name="Grimwood J."/>
            <person name="Schmutz J."/>
            <person name="Mullet J.E."/>
        </authorList>
    </citation>
    <scope>GENOME REANNOTATION</scope>
    <source>
        <strain>cv. BTx623</strain>
    </source>
</reference>
<gene>
    <name type="ordered locus">Sb04g028260</name>
</gene>
<accession>C5XYW4</accession>
<name>RU1C2_SORBI</name>
<organism>
    <name type="scientific">Sorghum bicolor</name>
    <name type="common">Sorghum</name>
    <name type="synonym">Sorghum vulgare</name>
    <dbReference type="NCBI Taxonomy" id="4558"/>
    <lineage>
        <taxon>Eukaryota</taxon>
        <taxon>Viridiplantae</taxon>
        <taxon>Streptophyta</taxon>
        <taxon>Embryophyta</taxon>
        <taxon>Tracheophyta</taxon>
        <taxon>Spermatophyta</taxon>
        <taxon>Magnoliopsida</taxon>
        <taxon>Liliopsida</taxon>
        <taxon>Poales</taxon>
        <taxon>Poaceae</taxon>
        <taxon>PACMAD clade</taxon>
        <taxon>Panicoideae</taxon>
        <taxon>Andropogonodae</taxon>
        <taxon>Andropogoneae</taxon>
        <taxon>Sorghinae</taxon>
        <taxon>Sorghum</taxon>
    </lineage>
</organism>
<protein>
    <recommendedName>
        <fullName evidence="1">U1 small nuclear ribonucleoprotein C-2</fullName>
        <shortName evidence="1">U1 snRNP C-2</shortName>
        <shortName evidence="1">U1-C-2</shortName>
        <shortName evidence="1">U1C-2</shortName>
    </recommendedName>
</protein>
<proteinExistence type="inferred from homology"/>
<dbReference type="EMBL" id="CM000763">
    <property type="protein sequence ID" value="EES05542.1"/>
    <property type="molecule type" value="Genomic_DNA"/>
</dbReference>
<dbReference type="RefSeq" id="XP_002452566.1">
    <property type="nucleotide sequence ID" value="XM_002452521.1"/>
</dbReference>
<dbReference type="SMR" id="C5XYW4"/>
<dbReference type="FunCoup" id="C5XYW4">
    <property type="interactions" value="13"/>
</dbReference>
<dbReference type="STRING" id="4558.C5XYW4"/>
<dbReference type="EnsemblPlants" id="EES05542">
    <property type="protein sequence ID" value="EES05542"/>
    <property type="gene ID" value="SORBI_3004G241800"/>
</dbReference>
<dbReference type="Gramene" id="EES05542">
    <property type="protein sequence ID" value="EES05542"/>
    <property type="gene ID" value="SORBI_3004G241800"/>
</dbReference>
<dbReference type="KEGG" id="sbi:8068597"/>
<dbReference type="eggNOG" id="KOG3454">
    <property type="taxonomic scope" value="Eukaryota"/>
</dbReference>
<dbReference type="HOGENOM" id="CLU_079697_1_0_1"/>
<dbReference type="InParanoid" id="C5XYW4"/>
<dbReference type="OMA" id="QMRPPLM"/>
<dbReference type="OrthoDB" id="76567at2759"/>
<dbReference type="Proteomes" id="UP000000768">
    <property type="component" value="Chromosome 4"/>
</dbReference>
<dbReference type="ExpressionAtlas" id="C5XYW4">
    <property type="expression patterns" value="baseline"/>
</dbReference>
<dbReference type="GO" id="GO:0000243">
    <property type="term" value="C:commitment complex"/>
    <property type="evidence" value="ECO:0007669"/>
    <property type="project" value="UniProtKB-UniRule"/>
</dbReference>
<dbReference type="GO" id="GO:0005685">
    <property type="term" value="C:U1 snRNP"/>
    <property type="evidence" value="ECO:0000318"/>
    <property type="project" value="GO_Central"/>
</dbReference>
<dbReference type="GO" id="GO:0071004">
    <property type="term" value="C:U2-type prespliceosome"/>
    <property type="evidence" value="ECO:0007669"/>
    <property type="project" value="UniProtKB-UniRule"/>
</dbReference>
<dbReference type="GO" id="GO:0003729">
    <property type="term" value="F:mRNA binding"/>
    <property type="evidence" value="ECO:0007669"/>
    <property type="project" value="UniProtKB-UniRule"/>
</dbReference>
<dbReference type="GO" id="GO:0030627">
    <property type="term" value="F:pre-mRNA 5'-splice site binding"/>
    <property type="evidence" value="ECO:0000318"/>
    <property type="project" value="GO_Central"/>
</dbReference>
<dbReference type="GO" id="GO:0030619">
    <property type="term" value="F:U1 snRNA binding"/>
    <property type="evidence" value="ECO:0007669"/>
    <property type="project" value="UniProtKB-UniRule"/>
</dbReference>
<dbReference type="GO" id="GO:0008270">
    <property type="term" value="F:zinc ion binding"/>
    <property type="evidence" value="ECO:0007669"/>
    <property type="project" value="UniProtKB-UniRule"/>
</dbReference>
<dbReference type="GO" id="GO:0000395">
    <property type="term" value="P:mRNA 5'-splice site recognition"/>
    <property type="evidence" value="ECO:0000318"/>
    <property type="project" value="GO_Central"/>
</dbReference>
<dbReference type="GO" id="GO:0000387">
    <property type="term" value="P:spliceosomal snRNP assembly"/>
    <property type="evidence" value="ECO:0007669"/>
    <property type="project" value="UniProtKB-UniRule"/>
</dbReference>
<dbReference type="FunFam" id="3.30.160.60:FF:000059">
    <property type="entry name" value="U1 small nuclear ribonucleoprotein C"/>
    <property type="match status" value="1"/>
</dbReference>
<dbReference type="Gene3D" id="3.30.160.60">
    <property type="entry name" value="Classic Zinc Finger"/>
    <property type="match status" value="1"/>
</dbReference>
<dbReference type="HAMAP" id="MF_03153">
    <property type="entry name" value="U1_C"/>
    <property type="match status" value="1"/>
</dbReference>
<dbReference type="InterPro" id="IPR000690">
    <property type="entry name" value="Matrin/U1-C_Znf_C2H2"/>
</dbReference>
<dbReference type="InterPro" id="IPR003604">
    <property type="entry name" value="Matrin/U1-like-C_Znf_C2H2"/>
</dbReference>
<dbReference type="InterPro" id="IPR013085">
    <property type="entry name" value="U1-CZ_Znf_C2H2"/>
</dbReference>
<dbReference type="InterPro" id="IPR017340">
    <property type="entry name" value="U1_snRNP-C"/>
</dbReference>
<dbReference type="InterPro" id="IPR036236">
    <property type="entry name" value="Znf_C2H2_sf"/>
</dbReference>
<dbReference type="PANTHER" id="PTHR31148">
    <property type="entry name" value="U1 SMALL NUCLEAR RIBONUCLEOPROTEIN C"/>
    <property type="match status" value="1"/>
</dbReference>
<dbReference type="PANTHER" id="PTHR31148:SF1">
    <property type="entry name" value="U1 SMALL NUCLEAR RIBONUCLEOPROTEIN C"/>
    <property type="match status" value="1"/>
</dbReference>
<dbReference type="Pfam" id="PF06220">
    <property type="entry name" value="zf-U1"/>
    <property type="match status" value="1"/>
</dbReference>
<dbReference type="PIRSF" id="PIRSF037969">
    <property type="entry name" value="U1_snRNP-C"/>
    <property type="match status" value="1"/>
</dbReference>
<dbReference type="SMART" id="SM00451">
    <property type="entry name" value="ZnF_U1"/>
    <property type="match status" value="1"/>
</dbReference>
<dbReference type="SUPFAM" id="SSF57667">
    <property type="entry name" value="beta-beta-alpha zinc fingers"/>
    <property type="match status" value="1"/>
</dbReference>
<dbReference type="PROSITE" id="PS50171">
    <property type="entry name" value="ZF_MATRIN"/>
    <property type="match status" value="1"/>
</dbReference>
<evidence type="ECO:0000255" key="1">
    <source>
        <dbReference type="HAMAP-Rule" id="MF_03153"/>
    </source>
</evidence>
<evidence type="ECO:0000256" key="2">
    <source>
        <dbReference type="SAM" id="MobiDB-lite"/>
    </source>
</evidence>
<keyword id="KW-0479">Metal-binding</keyword>
<keyword id="KW-0539">Nucleus</keyword>
<keyword id="KW-1185">Reference proteome</keyword>
<keyword id="KW-0687">Ribonucleoprotein</keyword>
<keyword id="KW-0694">RNA-binding</keyword>
<keyword id="KW-0862">Zinc</keyword>
<keyword id="KW-0863">Zinc-finger</keyword>
<sequence length="228" mass="23798">MPRYYCDYCDTYLTHDSPSVRKQHNAGYKHKANVRTYYQQFEEQQTQSLIDQRIKEHLGQAAAFQAGAPFNQHMLAFPGAVARPRLPILPTPGMPHGFPQAPLMPGVRPPILPAPGVPGYPGAPPTMPQPGAPPGSMPQPGAPPGSMPQPGAPPGSMPMQMAPLPRPPTLPPPTSGVPGAPIPNSAAPPAIYQANPPAPAGPTSGAPPAPPTAPQPAFSYALPSEGNH</sequence>
<feature type="chain" id="PRO_0000414271" description="U1 small nuclear ribonucleoprotein C-2">
    <location>
        <begin position="1"/>
        <end position="228"/>
    </location>
</feature>
<feature type="zinc finger region" description="Matrin-type" evidence="1">
    <location>
        <begin position="4"/>
        <end position="36"/>
    </location>
</feature>
<feature type="region of interest" description="Disordered" evidence="2">
    <location>
        <begin position="105"/>
        <end position="228"/>
    </location>
</feature>
<feature type="compositionally biased region" description="Pro residues" evidence="2">
    <location>
        <begin position="107"/>
        <end position="156"/>
    </location>
</feature>
<feature type="compositionally biased region" description="Pro residues" evidence="2">
    <location>
        <begin position="164"/>
        <end position="175"/>
    </location>
</feature>
<feature type="compositionally biased region" description="Low complexity" evidence="2">
    <location>
        <begin position="178"/>
        <end position="190"/>
    </location>
</feature>
<feature type="compositionally biased region" description="Pro residues" evidence="2">
    <location>
        <begin position="196"/>
        <end position="214"/>
    </location>
</feature>
<comment type="function">
    <text evidence="1">Component of the spliceosomal U1 snRNP, which is essential for recognition of the pre-mRNA 5' splice-site and the subsequent assembly of the spliceosome. U1-C is directly involved in initial 5' splice-site recognition for both constitutive and regulated alternative splicing. The interaction with the 5' splice-site seems to precede base-pairing between the pre-mRNA and the U1 snRNA. Stimulates commitment or early (E) complex formation by stabilizing the base pairing of the 5' end of the U1 snRNA and the 5' splice-site region.</text>
</comment>
<comment type="subunit">
    <text evidence="1">U1 snRNP is composed of the 7 core Sm proteins B/B', D1, D2, D3, E, F and G that assemble in a heptameric protein ring on the Sm site of the small nuclear RNA to form the core snRNP, and at least 3 U1 snRNP-specific proteins U1-70K, U1-A and U1-C. U1-C interacts with U1 snRNA and the 5' splice-site region of the pre-mRNA.</text>
</comment>
<comment type="subcellular location">
    <subcellularLocation>
        <location evidence="1">Nucleus</location>
    </subcellularLocation>
</comment>
<comment type="similarity">
    <text evidence="1">Belongs to the U1 small nuclear ribonucleoprotein C family.</text>
</comment>